<organism>
    <name type="scientific">Streptococcus pneumoniae (strain Taiwan19F-14)</name>
    <dbReference type="NCBI Taxonomy" id="487213"/>
    <lineage>
        <taxon>Bacteria</taxon>
        <taxon>Bacillati</taxon>
        <taxon>Bacillota</taxon>
        <taxon>Bacilli</taxon>
        <taxon>Lactobacillales</taxon>
        <taxon>Streptococcaceae</taxon>
        <taxon>Streptococcus</taxon>
    </lineage>
</organism>
<dbReference type="EMBL" id="CP000921">
    <property type="protein sequence ID" value="ACO23950.1"/>
    <property type="molecule type" value="Genomic_DNA"/>
</dbReference>
<dbReference type="RefSeq" id="WP_000705097.1">
    <property type="nucleotide sequence ID" value="NC_012469.1"/>
</dbReference>
<dbReference type="SMR" id="C1CTD1"/>
<dbReference type="KEGG" id="snt:SPT_1847"/>
<dbReference type="HOGENOM" id="CLU_066607_4_0_9"/>
<dbReference type="GO" id="GO:0005737">
    <property type="term" value="C:cytoplasm"/>
    <property type="evidence" value="ECO:0007669"/>
    <property type="project" value="UniProtKB-SubCell"/>
</dbReference>
<dbReference type="GO" id="GO:0006282">
    <property type="term" value="P:regulation of DNA repair"/>
    <property type="evidence" value="ECO:0007669"/>
    <property type="project" value="UniProtKB-UniRule"/>
</dbReference>
<dbReference type="Gene3D" id="1.10.10.10">
    <property type="entry name" value="Winged helix-like DNA-binding domain superfamily/Winged helix DNA-binding domain"/>
    <property type="match status" value="4"/>
</dbReference>
<dbReference type="HAMAP" id="MF_01114">
    <property type="entry name" value="RecX"/>
    <property type="match status" value="1"/>
</dbReference>
<dbReference type="InterPro" id="IPR053926">
    <property type="entry name" value="RecX_HTH_1st"/>
</dbReference>
<dbReference type="InterPro" id="IPR053924">
    <property type="entry name" value="RecX_HTH_2nd"/>
</dbReference>
<dbReference type="InterPro" id="IPR053925">
    <property type="entry name" value="RecX_HTH_3rd"/>
</dbReference>
<dbReference type="InterPro" id="IPR003783">
    <property type="entry name" value="Regulatory_RecX"/>
</dbReference>
<dbReference type="InterPro" id="IPR036388">
    <property type="entry name" value="WH-like_DNA-bd_sf"/>
</dbReference>
<dbReference type="NCBIfam" id="NF010733">
    <property type="entry name" value="PRK14135.1"/>
    <property type="match status" value="1"/>
</dbReference>
<dbReference type="PANTHER" id="PTHR33602">
    <property type="entry name" value="REGULATORY PROTEIN RECX FAMILY PROTEIN"/>
    <property type="match status" value="1"/>
</dbReference>
<dbReference type="PANTHER" id="PTHR33602:SF1">
    <property type="entry name" value="REGULATORY PROTEIN RECX FAMILY PROTEIN"/>
    <property type="match status" value="1"/>
</dbReference>
<dbReference type="Pfam" id="PF21982">
    <property type="entry name" value="RecX_HTH1"/>
    <property type="match status" value="1"/>
</dbReference>
<dbReference type="Pfam" id="PF02631">
    <property type="entry name" value="RecX_HTH2"/>
    <property type="match status" value="1"/>
</dbReference>
<dbReference type="Pfam" id="PF21981">
    <property type="entry name" value="RecX_HTH3"/>
    <property type="match status" value="1"/>
</dbReference>
<proteinExistence type="inferred from homology"/>
<gene>
    <name evidence="1" type="primary">recX</name>
    <name type="ordered locus">SPT_1847</name>
</gene>
<feature type="chain" id="PRO_1000164031" description="Regulatory protein RecX">
    <location>
        <begin position="1"/>
        <end position="258"/>
    </location>
</feature>
<keyword id="KW-0963">Cytoplasm</keyword>
<reference key="1">
    <citation type="journal article" date="2010" name="Genome Biol.">
        <title>Structure and dynamics of the pan-genome of Streptococcus pneumoniae and closely related species.</title>
        <authorList>
            <person name="Donati C."/>
            <person name="Hiller N.L."/>
            <person name="Tettelin H."/>
            <person name="Muzzi A."/>
            <person name="Croucher N.J."/>
            <person name="Angiuoli S.V."/>
            <person name="Oggioni M."/>
            <person name="Dunning Hotopp J.C."/>
            <person name="Hu F.Z."/>
            <person name="Riley D.R."/>
            <person name="Covacci A."/>
            <person name="Mitchell T.J."/>
            <person name="Bentley S.D."/>
            <person name="Kilian M."/>
            <person name="Ehrlich G.D."/>
            <person name="Rappuoli R."/>
            <person name="Moxon E.R."/>
            <person name="Masignani V."/>
        </authorList>
    </citation>
    <scope>NUCLEOTIDE SEQUENCE [LARGE SCALE GENOMIC DNA]</scope>
    <source>
        <strain>Taiwan19F-14</strain>
    </source>
</reference>
<name>RECX_STRZT</name>
<sequence length="258" mass="30209">MKITKLEKKKRLYLMELDNGDKCYITEDTIVRFMLSRDKVISEEELKEIQDFAQFSYGKNLALYHLSFKARTEKEVREYLKKYDIDKNIVSQVIANLKEDKWINDGQYAYAIINTNQLSGDKGPYVLTQKLAQKGISKSTIEENLKEFDFSEVAQRVANKLLKKYEGKLPARALQDKIIQNLTNKGFSYSDAKIAFDDLDSQVDQETTQELIFKELDKQYTKYARKYEGYELKQRLTQVLARKGYDFSDIASALREYL</sequence>
<evidence type="ECO:0000255" key="1">
    <source>
        <dbReference type="HAMAP-Rule" id="MF_01114"/>
    </source>
</evidence>
<comment type="function">
    <text evidence="1">Modulates RecA activity.</text>
</comment>
<comment type="subcellular location">
    <subcellularLocation>
        <location evidence="1">Cytoplasm</location>
    </subcellularLocation>
</comment>
<comment type="similarity">
    <text evidence="1">Belongs to the RecX family.</text>
</comment>
<protein>
    <recommendedName>
        <fullName evidence="1">Regulatory protein RecX</fullName>
    </recommendedName>
</protein>
<accession>C1CTD1</accession>